<reference key="1">
    <citation type="journal article" date="2004" name="Science">
        <title>The Ashbya gossypii genome as a tool for mapping the ancient Saccharomyces cerevisiae genome.</title>
        <authorList>
            <person name="Dietrich F.S."/>
            <person name="Voegeli S."/>
            <person name="Brachat S."/>
            <person name="Lerch A."/>
            <person name="Gates K."/>
            <person name="Steiner S."/>
            <person name="Mohr C."/>
            <person name="Poehlmann R."/>
            <person name="Luedi P."/>
            <person name="Choi S."/>
            <person name="Wing R.A."/>
            <person name="Flavier A."/>
            <person name="Gaffney T.D."/>
            <person name="Philippsen P."/>
        </authorList>
    </citation>
    <scope>NUCLEOTIDE SEQUENCE [LARGE SCALE GENOMIC DNA]</scope>
    <source>
        <strain>ATCC 10895 / CBS 109.51 / FGSC 9923 / NRRL Y-1056</strain>
    </source>
</reference>
<reference key="2">
    <citation type="journal article" date="2013" name="G3 (Bethesda)">
        <title>Genomes of Ashbya fungi isolated from insects reveal four mating-type loci, numerous translocations, lack of transposons, and distinct gene duplications.</title>
        <authorList>
            <person name="Dietrich F.S."/>
            <person name="Voegeli S."/>
            <person name="Kuo S."/>
            <person name="Philippsen P."/>
        </authorList>
    </citation>
    <scope>GENOME REANNOTATION</scope>
    <source>
        <strain>ATCC 10895 / CBS 109.51 / FGSC 9923 / NRRL Y-1056</strain>
    </source>
</reference>
<name>MMM1_EREGS</name>
<evidence type="ECO:0000255" key="1">
    <source>
        <dbReference type="HAMAP-Rule" id="MF_03103"/>
    </source>
</evidence>
<evidence type="ECO:0000256" key="2">
    <source>
        <dbReference type="SAM" id="MobiDB-lite"/>
    </source>
</evidence>
<accession>Q75FA5</accession>
<gene>
    <name evidence="1" type="primary">MMM1</name>
    <name type="ordered locus">AAL166C</name>
</gene>
<keyword id="KW-0256">Endoplasmic reticulum</keyword>
<keyword id="KW-0445">Lipid transport</keyword>
<keyword id="KW-0446">Lipid-binding</keyword>
<keyword id="KW-0472">Membrane</keyword>
<keyword id="KW-1185">Reference proteome</keyword>
<keyword id="KW-0812">Transmembrane</keyword>
<keyword id="KW-1133">Transmembrane helix</keyword>
<keyword id="KW-0813">Transport</keyword>
<protein>
    <recommendedName>
        <fullName evidence="1">Maintenance of mitochondrial morphology protein 1</fullName>
    </recommendedName>
</protein>
<proteinExistence type="inferred from homology"/>
<organism>
    <name type="scientific">Eremothecium gossypii (strain ATCC 10895 / CBS 109.51 / FGSC 9923 / NRRL Y-1056)</name>
    <name type="common">Yeast</name>
    <name type="synonym">Ashbya gossypii</name>
    <dbReference type="NCBI Taxonomy" id="284811"/>
    <lineage>
        <taxon>Eukaryota</taxon>
        <taxon>Fungi</taxon>
        <taxon>Dikarya</taxon>
        <taxon>Ascomycota</taxon>
        <taxon>Saccharomycotina</taxon>
        <taxon>Saccharomycetes</taxon>
        <taxon>Saccharomycetales</taxon>
        <taxon>Saccharomycetaceae</taxon>
        <taxon>Eremothecium</taxon>
    </lineage>
</organism>
<sequence length="444" mass="49774">MKGVENTLSQSESVNRGYNGWMGMESETSARATHSSEQMISLEEYVREMLPMHLQKLLMERIIEAEQTGAAHTSVFAAPTGVAAQYPAMGPPMLPGQTFSSRSFAEGLVVGQLSVIVVLIFFIKFFIFSDGPAKTGGGGGSSAESRSSGFTGSPLTSTTSRLLSTLIKRGGKEGTEFAEDSENERTRQINAILEKTYYDVETHSPESLDWFNVLIAQTIQKFREEALQKDNIVHSLNDFISRKSSQLPNYLDAVKITELDIGDDFPIFSNCRIKYSPPLNKKRLEAKIDIDLSDRLTLGIETRLLMNYPKYLTASLPVKLTVSMLRFQACLTVSLTTAEEFVPTMAATTDTDAGDSEGHYLVFSFSPDYRMEFDIKSLIGARSKLENIPKISSLVEYQIKKWFMDRCVEPRFQFVKLPSMWPRSKNTREEKSDMQEEDPSRAPE</sequence>
<comment type="function">
    <text evidence="1">Component of the ERMES/MDM complex, which serves as a molecular tether to connect the endoplasmic reticulum (ER) and mitochondria. Components of this complex are involved in the control of mitochondrial shape and protein biogenesis, and function in nonvesicular lipid trafficking between the ER and mitochondria. The MDM12-MMM1 subcomplex functions in the major beta-barrel assembly pathway that is responsible for biogenesis of all outer membrane beta-barrel proteins, and acts in a late step after the SAM complex. The MDM10-MDM12-MMM1 subcomplex further acts in the TOM40-specific pathway after the action of the MDM12-MMM1 complex. Essential for establishing and maintaining the structure of mitochondria and maintenance of mtDNA nucleoids.</text>
</comment>
<comment type="subunit">
    <text evidence="1">Homodimer. Component of the ER-mitochondria encounter structure (ERMES) or MDM complex, composed of MMM1, MDM10, MDM12 and MDM34. A MMM1 homodimer associates with one molecule of MDM12 on each side in a pairwise head-to-tail manner, and the SMP-LTD domains of MMM1 and MDM12 generate a continuous hydrophobic tunnel for phospholipid trafficking.</text>
</comment>
<comment type="subcellular location">
    <subcellularLocation>
        <location evidence="1">Endoplasmic reticulum membrane</location>
        <topology evidence="1">Single-pass type I membrane protein</topology>
    </subcellularLocation>
    <text evidence="1">The ERMES/MDM complex localizes to a few discrete foci (around 10 per single cell), that represent mitochondria-endoplasmic reticulum junctions. These foci are often found next to mtDNA nucleoids.</text>
</comment>
<comment type="domain">
    <text evidence="1">The SMP-LTD domain is a barrel-like domain that can bind various types of glycerophospholipids in its interior and mediate their transfer between two adjacent bilayers.</text>
</comment>
<comment type="similarity">
    <text evidence="1">Belongs to the MMM1 family.</text>
</comment>
<feature type="chain" id="PRO_0000384211" description="Maintenance of mitochondrial morphology protein 1">
    <location>
        <begin position="1"/>
        <end position="444"/>
    </location>
</feature>
<feature type="topological domain" description="Lumenal" evidence="1">
    <location>
        <begin position="1"/>
        <end position="107"/>
    </location>
</feature>
<feature type="transmembrane region" description="Helical" evidence="1">
    <location>
        <begin position="108"/>
        <end position="128"/>
    </location>
</feature>
<feature type="topological domain" description="Cytoplasmic" evidence="1">
    <location>
        <begin position="129"/>
        <end position="444"/>
    </location>
</feature>
<feature type="domain" description="SMP-LTD" evidence="1">
    <location>
        <begin position="204"/>
        <end position="418"/>
    </location>
</feature>
<feature type="region of interest" description="Disordered" evidence="2">
    <location>
        <begin position="1"/>
        <end position="20"/>
    </location>
</feature>
<feature type="region of interest" description="Disordered" evidence="2">
    <location>
        <begin position="136"/>
        <end position="157"/>
    </location>
</feature>
<feature type="region of interest" description="Disordered" evidence="2">
    <location>
        <begin position="425"/>
        <end position="444"/>
    </location>
</feature>
<feature type="compositionally biased region" description="Polar residues" evidence="2">
    <location>
        <begin position="1"/>
        <end position="16"/>
    </location>
</feature>
<feature type="compositionally biased region" description="Low complexity" evidence="2">
    <location>
        <begin position="142"/>
        <end position="157"/>
    </location>
</feature>
<feature type="compositionally biased region" description="Basic and acidic residues" evidence="2">
    <location>
        <begin position="426"/>
        <end position="444"/>
    </location>
</feature>
<dbReference type="EMBL" id="AE016814">
    <property type="protein sequence ID" value="AAS50200.1"/>
    <property type="molecule type" value="Genomic_DNA"/>
</dbReference>
<dbReference type="RefSeq" id="NP_982376.1">
    <property type="nucleotide sequence ID" value="NM_207729.1"/>
</dbReference>
<dbReference type="SMR" id="Q75FA5"/>
<dbReference type="FunCoup" id="Q75FA5">
    <property type="interactions" value="98"/>
</dbReference>
<dbReference type="STRING" id="284811.Q75FA5"/>
<dbReference type="EnsemblFungi" id="AAS50200">
    <property type="protein sequence ID" value="AAS50200"/>
    <property type="gene ID" value="AGOS_AAL166C"/>
</dbReference>
<dbReference type="GeneID" id="4618775"/>
<dbReference type="KEGG" id="ago:AGOS_AAL166C"/>
<dbReference type="eggNOG" id="ENOG502QUUW">
    <property type="taxonomic scope" value="Eukaryota"/>
</dbReference>
<dbReference type="HOGENOM" id="CLU_032730_2_0_1"/>
<dbReference type="InParanoid" id="Q75FA5"/>
<dbReference type="OMA" id="WSFTQGL"/>
<dbReference type="OrthoDB" id="5599157at2759"/>
<dbReference type="Proteomes" id="UP000000591">
    <property type="component" value="Chromosome I"/>
</dbReference>
<dbReference type="GO" id="GO:0005783">
    <property type="term" value="C:endoplasmic reticulum"/>
    <property type="evidence" value="ECO:0000318"/>
    <property type="project" value="GO_Central"/>
</dbReference>
<dbReference type="GO" id="GO:0005789">
    <property type="term" value="C:endoplasmic reticulum membrane"/>
    <property type="evidence" value="ECO:0007669"/>
    <property type="project" value="UniProtKB-SubCell"/>
</dbReference>
<dbReference type="GO" id="GO:0032865">
    <property type="term" value="C:ERMES complex"/>
    <property type="evidence" value="ECO:0000318"/>
    <property type="project" value="GO_Central"/>
</dbReference>
<dbReference type="GO" id="GO:0008289">
    <property type="term" value="F:lipid binding"/>
    <property type="evidence" value="ECO:0000318"/>
    <property type="project" value="GO_Central"/>
</dbReference>
<dbReference type="GO" id="GO:0120013">
    <property type="term" value="F:lipid transfer activity"/>
    <property type="evidence" value="ECO:0007669"/>
    <property type="project" value="EnsemblFungi"/>
</dbReference>
<dbReference type="GO" id="GO:0015917">
    <property type="term" value="P:aminophospholipid transport"/>
    <property type="evidence" value="ECO:0000318"/>
    <property type="project" value="GO_Central"/>
</dbReference>
<dbReference type="GO" id="GO:0000002">
    <property type="term" value="P:mitochondrial genome maintenance"/>
    <property type="evidence" value="ECO:0007669"/>
    <property type="project" value="UniProtKB-UniRule"/>
</dbReference>
<dbReference type="GO" id="GO:0070096">
    <property type="term" value="P:mitochondrial outer membrane translocase complex assembly"/>
    <property type="evidence" value="ECO:0007669"/>
    <property type="project" value="EnsemblFungi"/>
</dbReference>
<dbReference type="GO" id="GO:1990456">
    <property type="term" value="P:mitochondrion-endoplasmic reticulum membrane tethering"/>
    <property type="evidence" value="ECO:0000318"/>
    <property type="project" value="GO_Central"/>
</dbReference>
<dbReference type="GO" id="GO:0045040">
    <property type="term" value="P:protein insertion into mitochondrial outer membrane"/>
    <property type="evidence" value="ECO:0007669"/>
    <property type="project" value="UniProtKB-UniRule"/>
</dbReference>
<dbReference type="CDD" id="cd21671">
    <property type="entry name" value="SMP_Mmm1"/>
    <property type="match status" value="1"/>
</dbReference>
<dbReference type="HAMAP" id="MF_03103">
    <property type="entry name" value="Mmm1"/>
    <property type="match status" value="1"/>
</dbReference>
<dbReference type="InterPro" id="IPR027537">
    <property type="entry name" value="Mmm1"/>
</dbReference>
<dbReference type="InterPro" id="IPR019411">
    <property type="entry name" value="MMM1_dom"/>
</dbReference>
<dbReference type="InterPro" id="IPR031468">
    <property type="entry name" value="SMP_LBD"/>
</dbReference>
<dbReference type="PANTHER" id="PTHR13466:SF0">
    <property type="entry name" value="SMP-LTD DOMAIN-CONTAINING PROTEIN"/>
    <property type="match status" value="1"/>
</dbReference>
<dbReference type="PANTHER" id="PTHR13466">
    <property type="entry name" value="TEX2 PROTEIN-RELATED"/>
    <property type="match status" value="1"/>
</dbReference>
<dbReference type="Pfam" id="PF10296">
    <property type="entry name" value="MMM1"/>
    <property type="match status" value="1"/>
</dbReference>
<dbReference type="PROSITE" id="PS51847">
    <property type="entry name" value="SMP"/>
    <property type="match status" value="1"/>
</dbReference>